<comment type="function">
    <text>This colicin is a channel-forming colicin. This class of transmembrane toxins depolarize the cytoplasmic membrane, leading to dissipation of cellular energy.</text>
</comment>
<comment type="function">
    <text>Colicins are polypeptide toxins produced by and active against E.coli and closely related bacteria.</text>
</comment>
<comment type="interaction">
    <interactant intactId="EBI-15691934">
        <id>P08083</id>
    </interactant>
    <interactant intactId="EBI-371336">
        <id>P02931</id>
        <label>ompF</label>
    </interactant>
    <organismsDiffer>true</organismsDiffer>
    <experiments>3</experiments>
</comment>
<comment type="subcellular location">
    <subcellularLocation>
        <location evidence="3">Cell membrane</location>
        <topology evidence="3">Multi-pass membrane protein</topology>
    </subcellularLocation>
</comment>
<comment type="similarity">
    <text evidence="3">Belongs to the channel forming colicin family.</text>
</comment>
<gene>
    <name type="primary">cna</name>
</gene>
<organism>
    <name type="scientific">Escherichia coli</name>
    <dbReference type="NCBI Taxonomy" id="562"/>
    <lineage>
        <taxon>Bacteria</taxon>
        <taxon>Pseudomonadati</taxon>
        <taxon>Pseudomonadota</taxon>
        <taxon>Gammaproteobacteria</taxon>
        <taxon>Enterobacterales</taxon>
        <taxon>Enterobacteriaceae</taxon>
        <taxon>Escherichia</taxon>
    </lineage>
</organism>
<dbReference type="EMBL" id="Y00533">
    <property type="protein sequence ID" value="CAA68592.1"/>
    <property type="molecule type" value="Genomic_DNA"/>
</dbReference>
<dbReference type="EMBL" id="X06933">
    <property type="protein sequence ID" value="CAA30021.1"/>
    <property type="molecule type" value="Genomic_DNA"/>
</dbReference>
<dbReference type="PIR" id="S00867">
    <property type="entry name" value="S00867"/>
</dbReference>
<dbReference type="RefSeq" id="WP_032488335.1">
    <property type="nucleotide sequence ID" value="NZ_VTMM01000024.1"/>
</dbReference>
<dbReference type="PDB" id="1A87">
    <property type="method" value="X-ray"/>
    <property type="resolution" value="3.10 A"/>
    <property type="chains" value="A=67-387"/>
</dbReference>
<dbReference type="PDBsum" id="1A87"/>
<dbReference type="BMRB" id="P08083"/>
<dbReference type="SASBDB" id="P08083"/>
<dbReference type="SMR" id="P08083"/>
<dbReference type="DIP" id="DIP-29645N"/>
<dbReference type="IntAct" id="P08083">
    <property type="interactions" value="1"/>
</dbReference>
<dbReference type="TCDB" id="1.C.1.3.3">
    <property type="family name" value="the channel-forming colicin (colicin) family"/>
</dbReference>
<dbReference type="EvolutionaryTrace" id="P08083"/>
<dbReference type="GO" id="GO:0005886">
    <property type="term" value="C:plasma membrane"/>
    <property type="evidence" value="ECO:0007669"/>
    <property type="project" value="UniProtKB-SubCell"/>
</dbReference>
<dbReference type="GO" id="GO:0140911">
    <property type="term" value="F:pore-forming activity"/>
    <property type="evidence" value="ECO:0007669"/>
    <property type="project" value="InterPro"/>
</dbReference>
<dbReference type="GO" id="GO:0044325">
    <property type="term" value="F:transmembrane transporter binding"/>
    <property type="evidence" value="ECO:0000353"/>
    <property type="project" value="CAFA"/>
</dbReference>
<dbReference type="GO" id="GO:0050829">
    <property type="term" value="P:defense response to Gram-negative bacterium"/>
    <property type="evidence" value="ECO:0007669"/>
    <property type="project" value="InterPro"/>
</dbReference>
<dbReference type="GO" id="GO:0031640">
    <property type="term" value="P:killing of cells of another organism"/>
    <property type="evidence" value="ECO:0007669"/>
    <property type="project" value="UniProtKB-KW"/>
</dbReference>
<dbReference type="GO" id="GO:0032413">
    <property type="term" value="P:negative regulation of ion transmembrane transporter activity"/>
    <property type="evidence" value="ECO:0000314"/>
    <property type="project" value="CAFA"/>
</dbReference>
<dbReference type="DisProt" id="DP00461"/>
<dbReference type="Gene3D" id="1.10.490.30">
    <property type="entry name" value="Colicin"/>
    <property type="match status" value="1"/>
</dbReference>
<dbReference type="Gene3D" id="3.30.1120.60">
    <property type="entry name" value="Colicin"/>
    <property type="match status" value="1"/>
</dbReference>
<dbReference type="InterPro" id="IPR000293">
    <property type="entry name" value="Channel_colicin_C"/>
</dbReference>
<dbReference type="InterPro" id="IPR038283">
    <property type="entry name" value="Channel_colicin_C_sf"/>
</dbReference>
<dbReference type="Pfam" id="PF01024">
    <property type="entry name" value="Colicin"/>
    <property type="match status" value="1"/>
</dbReference>
<dbReference type="PRINTS" id="PR00280">
    <property type="entry name" value="CHANLCOLICIN"/>
</dbReference>
<dbReference type="SUPFAM" id="SSF56837">
    <property type="entry name" value="Colicin"/>
    <property type="match status" value="1"/>
</dbReference>
<dbReference type="PROSITE" id="PS00276">
    <property type="entry name" value="CHANNEL_COLICIN"/>
    <property type="match status" value="1"/>
</dbReference>
<feature type="chain" id="PRO_0000218674" description="Colicin-N">
    <location>
        <begin position="1"/>
        <end position="387"/>
    </location>
</feature>
<feature type="transmembrane region" description="Helical" evidence="1">
    <location>
        <begin position="325"/>
        <end position="345"/>
    </location>
</feature>
<feature type="transmembrane region" description="Helical" evidence="1">
    <location>
        <begin position="350"/>
        <end position="370"/>
    </location>
</feature>
<feature type="region of interest" description="Disordered" evidence="2">
    <location>
        <begin position="1"/>
        <end position="106"/>
    </location>
</feature>
<feature type="compositionally biased region" description="Polar residues" evidence="2">
    <location>
        <begin position="1"/>
        <end position="11"/>
    </location>
</feature>
<feature type="compositionally biased region" description="Gly residues" evidence="2">
    <location>
        <begin position="14"/>
        <end position="30"/>
    </location>
</feature>
<feature type="compositionally biased region" description="Low complexity" evidence="2">
    <location>
        <begin position="31"/>
        <end position="48"/>
    </location>
</feature>
<feature type="compositionally biased region" description="Gly residues" evidence="2">
    <location>
        <begin position="78"/>
        <end position="87"/>
    </location>
</feature>
<feature type="strand" evidence="4">
    <location>
        <begin position="97"/>
        <end position="101"/>
    </location>
</feature>
<feature type="strand" evidence="4">
    <location>
        <begin position="108"/>
        <end position="112"/>
    </location>
</feature>
<feature type="helix" evidence="4">
    <location>
        <begin position="114"/>
        <end position="116"/>
    </location>
</feature>
<feature type="turn" evidence="4">
    <location>
        <begin position="117"/>
        <end position="119"/>
    </location>
</feature>
<feature type="strand" evidence="4">
    <location>
        <begin position="121"/>
        <end position="128"/>
    </location>
</feature>
<feature type="strand" evidence="4">
    <location>
        <begin position="131"/>
        <end position="137"/>
    </location>
</feature>
<feature type="strand" evidence="4">
    <location>
        <begin position="143"/>
        <end position="148"/>
    </location>
</feature>
<feature type="helix" evidence="4">
    <location>
        <begin position="149"/>
        <end position="151"/>
    </location>
</feature>
<feature type="helix" evidence="4">
    <location>
        <begin position="153"/>
        <end position="155"/>
    </location>
</feature>
<feature type="strand" evidence="4">
    <location>
        <begin position="157"/>
        <end position="162"/>
    </location>
</feature>
<feature type="helix" evidence="4">
    <location>
        <begin position="170"/>
        <end position="214"/>
    </location>
</feature>
<feature type="helix" evidence="4">
    <location>
        <begin position="216"/>
        <end position="230"/>
    </location>
</feature>
<feature type="helix" evidence="4">
    <location>
        <begin position="234"/>
        <end position="236"/>
    </location>
</feature>
<feature type="helix" evidence="4">
    <location>
        <begin position="240"/>
        <end position="251"/>
    </location>
</feature>
<feature type="helix" evidence="4">
    <location>
        <begin position="260"/>
        <end position="271"/>
    </location>
</feature>
<feature type="helix" evidence="4">
    <location>
        <begin position="275"/>
        <end position="283"/>
    </location>
</feature>
<feature type="helix" evidence="4">
    <location>
        <begin position="287"/>
        <end position="289"/>
    </location>
</feature>
<feature type="helix" evidence="4">
    <location>
        <begin position="294"/>
        <end position="309"/>
    </location>
</feature>
<feature type="helix" evidence="4">
    <location>
        <begin position="315"/>
        <end position="326"/>
    </location>
</feature>
<feature type="helix" evidence="4">
    <location>
        <begin position="331"/>
        <end position="343"/>
    </location>
</feature>
<feature type="helix" evidence="4">
    <location>
        <begin position="352"/>
        <end position="370"/>
    </location>
</feature>
<feature type="helix" evidence="4">
    <location>
        <begin position="372"/>
        <end position="385"/>
    </location>
</feature>
<keyword id="KW-0002">3D-structure</keyword>
<keyword id="KW-0044">Antibiotic</keyword>
<keyword id="KW-0929">Antimicrobial</keyword>
<keyword id="KW-0078">Bacteriocin</keyword>
<keyword id="KW-1003">Cell membrane</keyword>
<keyword id="KW-0472">Membrane</keyword>
<keyword id="KW-0614">Plasmid</keyword>
<keyword id="KW-0812">Transmembrane</keyword>
<keyword id="KW-1133">Transmembrane helix</keyword>
<reference key="1">
    <citation type="journal article" date="1987" name="Mol. Microbiol.">
        <title>Nucleotide sequencing of the structural gene for colicin N reveals homology between the catalytic, C-terminal domains of colicins A and N.</title>
        <authorList>
            <person name="Pugsley A.P."/>
        </authorList>
    </citation>
    <scope>NUCLEOTIDE SEQUENCE [GENOMIC DNA]</scope>
</reference>
<reference key="2">
    <citation type="journal article" date="1988" name="Mol. Gen. Genet.">
        <title>The immunity and lysis genes of ColN plasmid pCHAP4.</title>
        <authorList>
            <person name="Pugsley A.P."/>
        </authorList>
    </citation>
    <scope>NUCLEOTIDE SEQUENCE [GENOMIC DNA] OF 372-387</scope>
</reference>
<reference key="3">
    <citation type="journal article" date="1998" name="Structure">
        <title>Crystal structure of a colicin N fragment suggests a model for toxicity.</title>
        <authorList>
            <person name="Vetter I.R."/>
            <person name="Parker M.W."/>
            <person name="Tucker A.D."/>
            <person name="Lakey J.H."/>
            <person name="Pattus F."/>
            <person name="Tsernoglou D."/>
        </authorList>
    </citation>
    <scope>X-RAY CRYSTALLOGRAPHY (3.1 ANGSTROMS) OF 91-387</scope>
</reference>
<name>CEAN_ECOLX</name>
<evidence type="ECO:0000255" key="1"/>
<evidence type="ECO:0000256" key="2">
    <source>
        <dbReference type="SAM" id="MobiDB-lite"/>
    </source>
</evidence>
<evidence type="ECO:0000305" key="3"/>
<evidence type="ECO:0007829" key="4">
    <source>
        <dbReference type="PDB" id="1A87"/>
    </source>
</evidence>
<accession>P08083</accession>
<proteinExistence type="evidence at protein level"/>
<sequence length="387" mass="41743">MGSNGADNAHNNAFGGGKNPGIGNTSGAGSNGSASSNRGNSNGWSWSNKPHKNDGFHSDGSYHITFHGDNNSKPKPGGNSGNRGNNGDGASAKVGEITITPDNSKPGRYISSNPEYSLLAKLIDAESIKGTEVYTFHTRKGQYVKVTVPDSNIDKMRVDYVNWKGPKYNNKLVKRFVSQFLLFRKEEKEKNEKEALLKASELVSGMGDKLGEYLGVKYKNVAKEVANDIKNFHGRNIRSYNEAMASLNKVLANPKMKVNKSDKDAIVNAWKQVNAKDMANKIGNLGKAFKVADLAIKVEKIREKSIEGYNTGNWGPLLLEVESWIIGGVVAGVAISLFGAVLSFLPISGLAVTALGVIGIMTISYLSSFIDANRVSNINNIISSVIR</sequence>
<protein>
    <recommendedName>
        <fullName>Colicin-N</fullName>
    </recommendedName>
</protein>
<geneLocation type="plasmid">
    <name>ColN pCHAP4</name>
</geneLocation>